<proteinExistence type="evidence at protein level"/>
<organism>
    <name type="scientific">Oryctolagus cuniculus</name>
    <name type="common">Rabbit</name>
    <dbReference type="NCBI Taxonomy" id="9986"/>
    <lineage>
        <taxon>Eukaryota</taxon>
        <taxon>Metazoa</taxon>
        <taxon>Chordata</taxon>
        <taxon>Craniata</taxon>
        <taxon>Vertebrata</taxon>
        <taxon>Euteleostomi</taxon>
        <taxon>Mammalia</taxon>
        <taxon>Eutheria</taxon>
        <taxon>Euarchontoglires</taxon>
        <taxon>Glires</taxon>
        <taxon>Lagomorpha</taxon>
        <taxon>Leporidae</taxon>
        <taxon>Oryctolagus</taxon>
    </lineage>
</organism>
<accession>P62975</accession>
<accession>P02248</accession>
<accession>P02249</accession>
<accession>P02250</accession>
<accession>Q29120</accession>
<accession>Q91887</accession>
<accession>Q91888</accession>
<evidence type="ECO:0000250" key="1"/>
<evidence type="ECO:0000250" key="2">
    <source>
        <dbReference type="UniProtKB" id="P0CG47"/>
    </source>
</evidence>
<evidence type="ECO:0000255" key="3">
    <source>
        <dbReference type="PROSITE-ProRule" id="PRU00214"/>
    </source>
</evidence>
<evidence type="ECO:0000269" key="4">
    <source>
    </source>
</evidence>
<evidence type="ECO:0000305" key="5"/>
<protein>
    <recommendedName>
        <fullName>Ubiquitin</fullName>
    </recommendedName>
</protein>
<comment type="function">
    <text evidence="1">Ubiquitin Exists either covalently attached to another protein, or free (unanchored). When covalently bound, it is conjugated to target proteins via an isopeptide bond either as a monomer (monoubiquitin), a polymer linked via different Lys residues of the ubiquitin (polyubiquitin chains) or a linear polymer linked via the initiator Met of the ubiquitin (linear polyubiquitin chains). Polyubiquitin chains, when attached to a target protein, have different functions depending on the Lys residue of the ubiquitin that is linked: Lys-6-linked may be involved in DNA repair; Lys-11-linked is involved in ERAD (endoplasmic reticulum-associated degradation) and in cell-cycle regulation; Lys-29-linked is involved in proteotoxic stress response and cell cycle; Lys-33-linked is involved in kinase modification; Lys-48-linked is involved in protein degradation via the proteasome; Lys-63-linked is involved in endocytosis, DNA-damage responses as well as in signaling processes leading to activation of the transcription factor NF-kappa-B. Linear polymer chains formed via attachment by the initiator Met lead to cell signaling. Ubiquitin is usually conjugated to Lys residues of target proteins, however, in rare cases, conjugation to Cys or Ser residues has been observed. When polyubiquitin is free (unanchored-polyubiquitin), it also has distinct roles, such as in activation of protein kinases, and in signaling (By similarity).</text>
</comment>
<comment type="subcellular location">
    <subcellularLocation>
        <location evidence="1">Cytoplasm</location>
    </subcellularLocation>
    <subcellularLocation>
        <location evidence="1">Nucleus</location>
    </subcellularLocation>
</comment>
<comment type="miscellaneous">
    <text>Ubiquitin is synthesized as a polyubiquitin precursor with exact head to tail repeats, the number of repeats differ between species. In some species there is a final amino-acid after the last repeat. Some ubiquitin genes contain a single copy of ubiquitin fused to a ribosomal protein (either eL40 or eS31).</text>
</comment>
<comment type="similarity">
    <text evidence="5">Belongs to the ubiquitin family.</text>
</comment>
<name>UBIQ_RABIT</name>
<reference key="1">
    <citation type="journal article" date="1992" name="Protein Seq. Data Anal.">
        <title>Structural characterization of rabbit brain ubiquitin.</title>
        <authorList>
            <person name="Wajih N."/>
            <person name="Siddiqi A.R."/>
            <person name="Kaiser R."/>
            <person name="Persson B."/>
            <person name="Zaidi Z.H."/>
            <person name="Joernvall H."/>
        </authorList>
    </citation>
    <scope>PROTEIN SEQUENCE</scope>
    <source>
        <tissue>Brain</tissue>
    </source>
</reference>
<keyword id="KW-0002">3D-structure</keyword>
<keyword id="KW-0963">Cytoplasm</keyword>
<keyword id="KW-0903">Direct protein sequencing</keyword>
<keyword id="KW-1017">Isopeptide bond</keyword>
<keyword id="KW-0539">Nucleus</keyword>
<keyword id="KW-1185">Reference proteome</keyword>
<keyword id="KW-0832">Ubl conjugation</keyword>
<dbReference type="PIR" id="S28203">
    <property type="entry name" value="S28203"/>
</dbReference>
<dbReference type="PDB" id="4UJC">
    <property type="method" value="EM"/>
    <property type="resolution" value="9.50 A"/>
    <property type="chains" value="m=1-76"/>
</dbReference>
<dbReference type="PDB" id="4UJD">
    <property type="method" value="EM"/>
    <property type="resolution" value="8.90 A"/>
    <property type="chains" value="m=1-76"/>
</dbReference>
<dbReference type="PDB" id="4UJE">
    <property type="method" value="EM"/>
    <property type="resolution" value="6.90 A"/>
    <property type="chains" value="m=1-76"/>
</dbReference>
<dbReference type="PDB" id="8BTK">
    <property type="method" value="EM"/>
    <property type="resolution" value="3.50 A"/>
    <property type="chains" value="Bm=1-76"/>
</dbReference>
<dbReference type="PDBsum" id="4UJC"/>
<dbReference type="PDBsum" id="4UJD"/>
<dbReference type="PDBsum" id="4UJE"/>
<dbReference type="PDBsum" id="8BTK"/>
<dbReference type="EMDB" id="EMD-16232"/>
<dbReference type="SMR" id="P62975"/>
<dbReference type="FunCoup" id="P62975">
    <property type="interactions" value="1609"/>
</dbReference>
<dbReference type="STRING" id="9986.ENSOCUP00000001111"/>
<dbReference type="iPTMnet" id="P62975"/>
<dbReference type="PaxDb" id="9986-ENSOCUP00000001111"/>
<dbReference type="eggNOG" id="KOG0004">
    <property type="taxonomic scope" value="Eukaryota"/>
</dbReference>
<dbReference type="InParanoid" id="P62975"/>
<dbReference type="Proteomes" id="UP000001811">
    <property type="component" value="Unplaced"/>
</dbReference>
<dbReference type="GO" id="GO:0005737">
    <property type="term" value="C:cytoplasm"/>
    <property type="evidence" value="ECO:0007669"/>
    <property type="project" value="UniProtKB-SubCell"/>
</dbReference>
<dbReference type="GO" id="GO:0005634">
    <property type="term" value="C:nucleus"/>
    <property type="evidence" value="ECO:0007669"/>
    <property type="project" value="UniProtKB-SubCell"/>
</dbReference>
<dbReference type="CDD" id="cd01803">
    <property type="entry name" value="Ubl_ubiquitin"/>
    <property type="match status" value="1"/>
</dbReference>
<dbReference type="FunFam" id="3.10.20.90:FF:000158">
    <property type="entry name" value="Polyubiquitin 5"/>
    <property type="match status" value="1"/>
</dbReference>
<dbReference type="Gene3D" id="3.10.20.90">
    <property type="entry name" value="Phosphatidylinositol 3-kinase Catalytic Subunit, Chain A, domain 1"/>
    <property type="match status" value="1"/>
</dbReference>
<dbReference type="InterPro" id="IPR000626">
    <property type="entry name" value="Ubiquitin-like_dom"/>
</dbReference>
<dbReference type="InterPro" id="IPR029071">
    <property type="entry name" value="Ubiquitin-like_domsf"/>
</dbReference>
<dbReference type="InterPro" id="IPR019954">
    <property type="entry name" value="Ubiquitin_CS"/>
</dbReference>
<dbReference type="InterPro" id="IPR019956">
    <property type="entry name" value="Ubiquitin_dom"/>
</dbReference>
<dbReference type="InterPro" id="IPR050158">
    <property type="entry name" value="Ubiquitin_ubiquitin-like"/>
</dbReference>
<dbReference type="PANTHER" id="PTHR10666">
    <property type="entry name" value="UBIQUITIN"/>
    <property type="match status" value="1"/>
</dbReference>
<dbReference type="Pfam" id="PF00240">
    <property type="entry name" value="ubiquitin"/>
    <property type="match status" value="1"/>
</dbReference>
<dbReference type="PRINTS" id="PR00348">
    <property type="entry name" value="UBIQUITIN"/>
</dbReference>
<dbReference type="SMART" id="SM00213">
    <property type="entry name" value="UBQ"/>
    <property type="match status" value="1"/>
</dbReference>
<dbReference type="SUPFAM" id="SSF54236">
    <property type="entry name" value="Ubiquitin-like"/>
    <property type="match status" value="1"/>
</dbReference>
<dbReference type="PROSITE" id="PS00299">
    <property type="entry name" value="UBIQUITIN_1"/>
    <property type="match status" value="1"/>
</dbReference>
<dbReference type="PROSITE" id="PS50053">
    <property type="entry name" value="UBIQUITIN_2"/>
    <property type="match status" value="1"/>
</dbReference>
<sequence length="76" mass="8565">MQIFVKTLTGKTITLEVEPSDTIENVKAKIQDKEGIPPDQQRLIFAGKQLEDGRTLSDYNIQKESTLHLVLRLRGG</sequence>
<feature type="chain" id="PRO_0000114805" description="Ubiquitin">
    <location>
        <begin position="1"/>
        <end position="76"/>
    </location>
</feature>
<feature type="domain" description="Ubiquitin-like" evidence="3">
    <location>
        <begin position="1"/>
        <end position="76"/>
    </location>
</feature>
<feature type="site" description="Interacts with activating enzyme">
    <location>
        <position position="54"/>
    </location>
</feature>
<feature type="site" description="Essential for function">
    <location>
        <position position="68"/>
    </location>
</feature>
<feature type="site" description="Interacts with activating enzyme">
    <location>
        <position position="72"/>
    </location>
</feature>
<feature type="cross-link" description="Glycyl lysine isopeptide (Lys-Gly) (interchain with G-Cter in ubiquitin)" evidence="2">
    <location>
        <position position="6"/>
    </location>
</feature>
<feature type="cross-link" description="Glycyl lysine isopeptide (Lys-Gly) (interchain with G-Cter in ubiquitin)" evidence="2">
    <location>
        <position position="11"/>
    </location>
</feature>
<feature type="cross-link" description="Glycyl lysine isopeptide (Lys-Gly) (interchain with G-Cter in ubiquitin)" evidence="2">
    <location>
        <position position="27"/>
    </location>
</feature>
<feature type="cross-link" description="Glycyl lysine isopeptide (Lys-Gly) (interchain with G-Cter in ubiquitin)" evidence="2">
    <location>
        <position position="29"/>
    </location>
</feature>
<feature type="cross-link" description="Glycyl lysine isopeptide (Lys-Gly) (interchain with G-Cter in ubiquitin)" evidence="2">
    <location>
        <position position="33"/>
    </location>
</feature>
<feature type="cross-link" description="Glycyl lysine isopeptide (Lys-Gly) (interchain with G-Cter in ubiquitin)" evidence="4">
    <location>
        <position position="48"/>
    </location>
</feature>
<feature type="cross-link" description="Glycyl lysine isopeptide (Lys-Gly) (interchain with G-Cter in ubiquitin)" evidence="2">
    <location>
        <position position="63"/>
    </location>
</feature>
<feature type="cross-link" description="Glycyl lysine isopeptide (Gly-Lys) (interchain with K-? in acceptor proteins)" evidence="3 4">
    <location>
        <position position="76"/>
    </location>
</feature>